<name>MBCA_MYCTU</name>
<evidence type="ECO:0000269" key="1">
    <source>
    </source>
</evidence>
<evidence type="ECO:0000269" key="2">
    <source>
    </source>
</evidence>
<evidence type="ECO:0000269" key="3">
    <source>
    </source>
</evidence>
<evidence type="ECO:0000269" key="4">
    <source>
    </source>
</evidence>
<evidence type="ECO:0000269" key="5">
    <source>
    </source>
</evidence>
<evidence type="ECO:0000269" key="6">
    <source>
    </source>
</evidence>
<evidence type="ECO:0000269" key="7">
    <source>
    </source>
</evidence>
<evidence type="ECO:0000303" key="8">
    <source>
    </source>
</evidence>
<evidence type="ECO:0000303" key="9">
    <source>
    </source>
</evidence>
<evidence type="ECO:0000303" key="10">
    <source>
    </source>
</evidence>
<evidence type="ECO:0000305" key="11"/>
<evidence type="ECO:0007829" key="12">
    <source>
        <dbReference type="PDB" id="6FKG"/>
    </source>
</evidence>
<sequence length="113" mass="12488">MGVNVLASTVSGAIERLGLTYEEVGDIVDASPRSVARWTAGQVVPQRLNKQRLIELAYVADALAEVLPRDQANVWMFSPNRLLEHRKPADLVRDGEYQRVLALIDAMAEGVFV</sequence>
<feature type="chain" id="PRO_0000014116" description="Mycobacterial cidal antitoxin MbcA">
    <location>
        <begin position="1"/>
        <end position="113"/>
    </location>
</feature>
<feature type="mutagenesis site" description="No longer neutralizes the toxic effect of MbcT." evidence="7">
    <location>
        <begin position="104"/>
        <end position="113"/>
    </location>
</feature>
<feature type="helix" evidence="12">
    <location>
        <begin position="5"/>
        <end position="17"/>
    </location>
</feature>
<feature type="helix" evidence="12">
    <location>
        <begin position="21"/>
        <end position="28"/>
    </location>
</feature>
<feature type="helix" evidence="12">
    <location>
        <begin position="32"/>
        <end position="39"/>
    </location>
</feature>
<feature type="helix" evidence="12">
    <location>
        <begin position="50"/>
        <end position="63"/>
    </location>
</feature>
<feature type="turn" evidence="12">
    <location>
        <begin position="64"/>
        <end position="66"/>
    </location>
</feature>
<feature type="helix" evidence="12">
    <location>
        <begin position="69"/>
        <end position="76"/>
    </location>
</feature>
<feature type="helix" evidence="12">
    <location>
        <begin position="81"/>
        <end position="83"/>
    </location>
</feature>
<feature type="helix" evidence="12">
    <location>
        <begin position="88"/>
        <end position="93"/>
    </location>
</feature>
<feature type="helix" evidence="12">
    <location>
        <begin position="97"/>
        <end position="108"/>
    </location>
</feature>
<reference key="1">
    <citation type="journal article" date="1998" name="Nature">
        <title>Deciphering the biology of Mycobacterium tuberculosis from the complete genome sequence.</title>
        <authorList>
            <person name="Cole S.T."/>
            <person name="Brosch R."/>
            <person name="Parkhill J."/>
            <person name="Garnier T."/>
            <person name="Churcher C.M."/>
            <person name="Harris D.E."/>
            <person name="Gordon S.V."/>
            <person name="Eiglmeier K."/>
            <person name="Gas S."/>
            <person name="Barry C.E. III"/>
            <person name="Tekaia F."/>
            <person name="Badcock K."/>
            <person name="Basham D."/>
            <person name="Brown D."/>
            <person name="Chillingworth T."/>
            <person name="Connor R."/>
            <person name="Davies R.M."/>
            <person name="Devlin K."/>
            <person name="Feltwell T."/>
            <person name="Gentles S."/>
            <person name="Hamlin N."/>
            <person name="Holroyd S."/>
            <person name="Hornsby T."/>
            <person name="Jagels K."/>
            <person name="Krogh A."/>
            <person name="McLean J."/>
            <person name="Moule S."/>
            <person name="Murphy L.D."/>
            <person name="Oliver S."/>
            <person name="Osborne J."/>
            <person name="Quail M.A."/>
            <person name="Rajandream M.A."/>
            <person name="Rogers J."/>
            <person name="Rutter S."/>
            <person name="Seeger K."/>
            <person name="Skelton S."/>
            <person name="Squares S."/>
            <person name="Squares R."/>
            <person name="Sulston J.E."/>
            <person name="Taylor K."/>
            <person name="Whitehead S."/>
            <person name="Barrell B.G."/>
        </authorList>
    </citation>
    <scope>NUCLEOTIDE SEQUENCE [LARGE SCALE GENOMIC DNA]</scope>
    <source>
        <strain>ATCC 25618 / H37Rv</strain>
    </source>
</reference>
<reference key="2">
    <citation type="journal article" date="2008" name="PLoS ONE">
        <title>The enduring hypoxic response of Mycobacterium tuberculosis.</title>
        <authorList>
            <person name="Rustad T.R."/>
            <person name="Harrell M.I."/>
            <person name="Liao R."/>
            <person name="Sherman D.R."/>
        </authorList>
    </citation>
    <scope>INDUCTION BY HYPOXIA</scope>
    <source>
        <strain>ATCC 27294 / TMC 102 / H37Rv</strain>
    </source>
</reference>
<reference key="3">
    <citation type="journal article" date="2010" name="PLoS Pathog.">
        <title>Functional genetic diversity among Mycobacterium tuberculosis complex clinical isolates: delineation of conserved core and lineage-specific transcriptomes during intracellular survival.</title>
        <authorList>
            <person name="Homolka S."/>
            <person name="Niemann S."/>
            <person name="Russell D.G."/>
            <person name="Rohde K.H."/>
        </authorList>
    </citation>
    <scope>INDUCTION IN MOUSE INFECTION MODEL</scope>
    <source>
        <strain>H37Rv</strain>
    </source>
</reference>
<reference key="4">
    <citation type="journal article" date="2011" name="MBio">
        <title>Characterization and transcriptome analysis of Mycobacterium tuberculosis persisters.</title>
        <authorList>
            <person name="Keren I."/>
            <person name="Minami S."/>
            <person name="Rubin E."/>
            <person name="Lewis K."/>
        </authorList>
    </citation>
    <scope>INDUCTION BY HYPOXIA AND IN PERSISTER CELLS</scope>
    <source>
        <strain>H37Rv</strain>
    </source>
</reference>
<reference key="5">
    <citation type="journal article" date="2011" name="Mol. Cell. Proteomics">
        <title>Proteogenomic analysis of Mycobacterium tuberculosis by high resolution mass spectrometry.</title>
        <authorList>
            <person name="Kelkar D.S."/>
            <person name="Kumar D."/>
            <person name="Kumar P."/>
            <person name="Balakrishnan L."/>
            <person name="Muthusamy B."/>
            <person name="Yadav A.K."/>
            <person name="Shrivastava P."/>
            <person name="Marimuthu A."/>
            <person name="Anand S."/>
            <person name="Sundaram H."/>
            <person name="Kingsbury R."/>
            <person name="Harsha H.C."/>
            <person name="Nair B."/>
            <person name="Prasad T.S."/>
            <person name="Chauhan D.S."/>
            <person name="Katoch K."/>
            <person name="Katoch V.M."/>
            <person name="Kumar P."/>
            <person name="Chaerkady R."/>
            <person name="Ramachandran S."/>
            <person name="Dash D."/>
            <person name="Pandey A."/>
        </authorList>
    </citation>
    <scope>IDENTIFICATION BY MASS SPECTROMETRY [LARGE SCALE ANALYSIS]</scope>
    <source>
        <strain>ATCC 25618 / H37Rv</strain>
    </source>
</reference>
<reference key="6">
    <citation type="journal article" date="2017" name="MBio">
        <title>Comprehensive essentiality analysis of the Mycobacterium tuberculosis genome via saturating transposon mutagenesis.</title>
        <authorList>
            <person name="DeJesus M.A."/>
            <person name="Gerrick E.R."/>
            <person name="Xu W."/>
            <person name="Park S.W."/>
            <person name="Long J.E."/>
            <person name="Boutte C.C."/>
            <person name="Rubin E.J."/>
            <person name="Schnappinger D."/>
            <person name="Ehrt S."/>
            <person name="Fortune S.M."/>
            <person name="Sassetti C.M."/>
            <person name="Ioerger T.R."/>
        </authorList>
    </citation>
    <scope>DISRUPTION PHENOTYPE</scope>
    <source>
        <strain>ATCC 25618 / H37Rv</strain>
    </source>
</reference>
<reference key="7">
    <citation type="journal article" date="2017" name="Sci. Rep.">
        <title>Co-expression network analysis of toxin-antitoxin loci in Mycobacterium tuberculosis reveals key modulators of cellular stress.</title>
        <authorList>
            <person name="Gupta A."/>
            <person name="Venkataraman B."/>
            <person name="Vasudevan M."/>
            <person name="Gopinath Bankar K."/>
        </authorList>
    </citation>
    <scope>INDUCTION BY STRESS</scope>
    <source>
        <strain>H37Rv</strain>
    </source>
</reference>
<reference key="8">
    <citation type="journal article" date="2019" name="Mol. Microbiol.">
        <title>The RES domain toxins of RES-Xre toxin-antitoxin modules induce cell stasis by degrading NAD+.</title>
        <authorList>
            <person name="Skjerning R.B."/>
            <person name="Senissar M."/>
            <person name="Winther K.S."/>
            <person name="Gerdes K."/>
            <person name="Brodersen D.E."/>
        </authorList>
    </citation>
    <scope>FUNCTION AS A TOXIN</scope>
    <scope>EXPRESSION IN E.COLI</scope>
    <source>
        <strain>H37Rv</strain>
    </source>
</reference>
<reference key="9">
    <citation type="journal article" date="2019" name="Mol. Cell">
        <title>An NAD+ phosphorylase toxin triggers Mycobacterium tuberculosis cell death.</title>
        <authorList>
            <person name="Freire D.M."/>
            <person name="Gutierrez C."/>
            <person name="Garza-Garcia A."/>
            <person name="Grabowska A.D."/>
            <person name="Sala A.J."/>
            <person name="Ariyachaokun K."/>
            <person name="Panikova T."/>
            <person name="Beckham K.S.H."/>
            <person name="Colom A."/>
            <person name="Pogenberg V."/>
            <person name="Cianci M."/>
            <person name="Tuukkanen A."/>
            <person name="Boudehen Y.M."/>
            <person name="Peixoto A."/>
            <person name="Botella L."/>
            <person name="Svergun D.I."/>
            <person name="Schnappinger D."/>
            <person name="Schneider T.R."/>
            <person name="Genevaux P."/>
            <person name="de Carvalho L.P.S."/>
            <person name="Wilmanns M."/>
            <person name="Parret A.H.A."/>
            <person name="Neyrolles O."/>
        </authorList>
    </citation>
    <scope>X-RAY CRYSTALLOGRAPHY (1.80 ANGSTROMS) IN COMPLEX WITH TOXIN</scope>
    <scope>FUNCTION AS AN ANTITOXIN</scope>
    <scope>SUBUNIT</scope>
    <scope>INDUCTION</scope>
    <scope>BIOTECHNOLOGY</scope>
    <scope>MUTAGENESIS OF 104-ILE--VAL-113</scope>
    <source>
        <strain>ATCC 27294 / TMC 102 / H37Rv</strain>
    </source>
</reference>
<organism>
    <name type="scientific">Mycobacterium tuberculosis (strain ATCC 25618 / H37Rv)</name>
    <dbReference type="NCBI Taxonomy" id="83332"/>
    <lineage>
        <taxon>Bacteria</taxon>
        <taxon>Bacillati</taxon>
        <taxon>Actinomycetota</taxon>
        <taxon>Actinomycetes</taxon>
        <taxon>Mycobacteriales</taxon>
        <taxon>Mycobacteriaceae</taxon>
        <taxon>Mycobacterium</taxon>
        <taxon>Mycobacterium tuberculosis complex</taxon>
    </lineage>
</organism>
<dbReference type="EMBL" id="AL123456">
    <property type="protein sequence ID" value="CCP44760.1"/>
    <property type="molecule type" value="Genomic_DNA"/>
</dbReference>
<dbReference type="PIR" id="D70757">
    <property type="entry name" value="D70757"/>
</dbReference>
<dbReference type="RefSeq" id="NP_216506.1">
    <property type="nucleotide sequence ID" value="NC_000962.3"/>
</dbReference>
<dbReference type="RefSeq" id="WP_003410003.1">
    <property type="nucleotide sequence ID" value="NZ_NVQJ01000043.1"/>
</dbReference>
<dbReference type="PDB" id="6FKG">
    <property type="method" value="X-ray"/>
    <property type="resolution" value="1.80 A"/>
    <property type="chains" value="C/D=1-113"/>
</dbReference>
<dbReference type="PDBsum" id="6FKG"/>
<dbReference type="SASBDB" id="P9WLP7"/>
<dbReference type="SMR" id="P9WLP7"/>
<dbReference type="STRING" id="83332.Rv1990c"/>
<dbReference type="PaxDb" id="83332-Rv1990c"/>
<dbReference type="DNASU" id="885422"/>
<dbReference type="GeneID" id="885422"/>
<dbReference type="KEGG" id="mtu:Rv1990c"/>
<dbReference type="KEGG" id="mtv:RVBD_1990c"/>
<dbReference type="TubercuList" id="Rv1990c"/>
<dbReference type="eggNOG" id="ENOG503154Z">
    <property type="taxonomic scope" value="Bacteria"/>
</dbReference>
<dbReference type="InParanoid" id="P9WLP7"/>
<dbReference type="OrthoDB" id="5122186at2"/>
<dbReference type="PhylomeDB" id="P9WLP7"/>
<dbReference type="Proteomes" id="UP000001584">
    <property type="component" value="Chromosome"/>
</dbReference>
<dbReference type="InterPro" id="IPR024467">
    <property type="entry name" value="Xre/MbcA/ParS-like_toxin-bd"/>
</dbReference>
<dbReference type="Pfam" id="PF09722">
    <property type="entry name" value="Xre_MbcA_ParS_C"/>
    <property type="match status" value="1"/>
</dbReference>
<keyword id="KW-0002">3D-structure</keyword>
<keyword id="KW-1185">Reference proteome</keyword>
<keyword id="KW-1277">Toxin-antitoxin system</keyword>
<accession>P9WLP7</accession>
<accession>L0TB09</accession>
<accession>P64909</accession>
<accession>Q10868</accession>
<protein>
    <recommendedName>
        <fullName evidence="10">Mycobacterial cidal antitoxin MbcA</fullName>
    </recommendedName>
    <alternativeName>
        <fullName evidence="9">Antitoxin Xre</fullName>
    </alternativeName>
    <alternativeName>
        <fullName evidence="8">ucAT8 antitoxin</fullName>
    </alternativeName>
</protein>
<comment type="function">
    <text evidence="6 7">Antitoxin component of a type II toxin-antitoxin (TA) system (PubMed:30315706, PubMed:30792174). Neutralizes the activity of cognate toxin MbcT by blocking access to the toxin active site (PubMed:30792174).</text>
</comment>
<comment type="subunit">
    <text evidence="7">Heterotetramer with 2 subunits each of MbcT and MbcA; the tetramers further assemble into trimers with 3-fold symmetry.</text>
</comment>
<comment type="induction">
    <text evidence="1 2 3 5 7">Induced by hypoxia (PubMed:18231589). Expression probably induced in both active and resting C57BL/6 mouse macrophages (PubMed:20628579). Induced in persister cells (PubMed:21673191). Induced by Ethambutol, Isoniazid and streptomycin treatment and by starvation, repressed by rifampicin treatment (PubMed:28724903). Probably part of the mbcT-mbcA operon (PubMed:30792174).</text>
</comment>
<comment type="disruption phenotype">
    <text evidence="4 7">Essential, it cannot be deleted (PubMed:28096490). Deletion of the mbcT-mbcA operon has no visible phenotype (PubMed:30792174).</text>
</comment>
<comment type="biotechnology">
    <text evidence="7">Molecules that disrupt the MbcT-MbcA complex could be candidates for anti-tuberculosis therapy.</text>
</comment>
<comment type="similarity">
    <text evidence="11">Belongs to the MbcA/ParS/Xre antitoxin family.</text>
</comment>
<gene>
    <name evidence="10" type="primary">mbcA</name>
    <name type="ordered locus">Rv1990c</name>
    <name type="ORF">MTCY39.29</name>
</gene>
<proteinExistence type="evidence at protein level"/>